<evidence type="ECO:0000255" key="1">
    <source>
        <dbReference type="HAMAP-Rule" id="MF_01367"/>
    </source>
</evidence>
<evidence type="ECO:0000305" key="2"/>
<protein>
    <recommendedName>
        <fullName evidence="1">Large ribosomal subunit protein uL14</fullName>
    </recommendedName>
    <alternativeName>
        <fullName evidence="2">50S ribosomal protein L14</fullName>
    </alternativeName>
</protein>
<organism>
    <name type="scientific">Lacticaseibacillus casei (strain BL23)</name>
    <name type="common">Lactobacillus casei</name>
    <dbReference type="NCBI Taxonomy" id="543734"/>
    <lineage>
        <taxon>Bacteria</taxon>
        <taxon>Bacillati</taxon>
        <taxon>Bacillota</taxon>
        <taxon>Bacilli</taxon>
        <taxon>Lactobacillales</taxon>
        <taxon>Lactobacillaceae</taxon>
        <taxon>Lacticaseibacillus</taxon>
    </lineage>
</organism>
<sequence>MIQQESRLKVADNSGAREILVIKVLGGSYRKTGNIGDVVVATVKQATPGGVVKKADVVKAVIVRTKSGARRADGSYIKFDENAAVIINADKSPRGTRIFGPVARELRDGDFMKIVSLAPEVL</sequence>
<dbReference type="EMBL" id="FM177140">
    <property type="protein sequence ID" value="CAQ67726.1"/>
    <property type="molecule type" value="Genomic_DNA"/>
</dbReference>
<dbReference type="SMR" id="B3WAK7"/>
<dbReference type="KEGG" id="lcb:LCABL_26600"/>
<dbReference type="HOGENOM" id="CLU_095071_2_1_9"/>
<dbReference type="GO" id="GO:0022625">
    <property type="term" value="C:cytosolic large ribosomal subunit"/>
    <property type="evidence" value="ECO:0007669"/>
    <property type="project" value="TreeGrafter"/>
</dbReference>
<dbReference type="GO" id="GO:0070180">
    <property type="term" value="F:large ribosomal subunit rRNA binding"/>
    <property type="evidence" value="ECO:0007669"/>
    <property type="project" value="TreeGrafter"/>
</dbReference>
<dbReference type="GO" id="GO:0003735">
    <property type="term" value="F:structural constituent of ribosome"/>
    <property type="evidence" value="ECO:0007669"/>
    <property type="project" value="InterPro"/>
</dbReference>
<dbReference type="GO" id="GO:0006412">
    <property type="term" value="P:translation"/>
    <property type="evidence" value="ECO:0007669"/>
    <property type="project" value="UniProtKB-UniRule"/>
</dbReference>
<dbReference type="CDD" id="cd00337">
    <property type="entry name" value="Ribosomal_uL14"/>
    <property type="match status" value="1"/>
</dbReference>
<dbReference type="FunFam" id="2.40.150.20:FF:000001">
    <property type="entry name" value="50S ribosomal protein L14"/>
    <property type="match status" value="1"/>
</dbReference>
<dbReference type="Gene3D" id="2.40.150.20">
    <property type="entry name" value="Ribosomal protein L14"/>
    <property type="match status" value="1"/>
</dbReference>
<dbReference type="HAMAP" id="MF_01367">
    <property type="entry name" value="Ribosomal_uL14"/>
    <property type="match status" value="1"/>
</dbReference>
<dbReference type="InterPro" id="IPR000218">
    <property type="entry name" value="Ribosomal_uL14"/>
</dbReference>
<dbReference type="InterPro" id="IPR005745">
    <property type="entry name" value="Ribosomal_uL14_bac-type"/>
</dbReference>
<dbReference type="InterPro" id="IPR019972">
    <property type="entry name" value="Ribosomal_uL14_CS"/>
</dbReference>
<dbReference type="InterPro" id="IPR036853">
    <property type="entry name" value="Ribosomal_uL14_sf"/>
</dbReference>
<dbReference type="NCBIfam" id="TIGR01067">
    <property type="entry name" value="rplN_bact"/>
    <property type="match status" value="1"/>
</dbReference>
<dbReference type="PANTHER" id="PTHR11761">
    <property type="entry name" value="50S/60S RIBOSOMAL PROTEIN L14/L23"/>
    <property type="match status" value="1"/>
</dbReference>
<dbReference type="PANTHER" id="PTHR11761:SF3">
    <property type="entry name" value="LARGE RIBOSOMAL SUBUNIT PROTEIN UL14M"/>
    <property type="match status" value="1"/>
</dbReference>
<dbReference type="Pfam" id="PF00238">
    <property type="entry name" value="Ribosomal_L14"/>
    <property type="match status" value="1"/>
</dbReference>
<dbReference type="SMART" id="SM01374">
    <property type="entry name" value="Ribosomal_L14"/>
    <property type="match status" value="1"/>
</dbReference>
<dbReference type="SUPFAM" id="SSF50193">
    <property type="entry name" value="Ribosomal protein L14"/>
    <property type="match status" value="1"/>
</dbReference>
<dbReference type="PROSITE" id="PS00049">
    <property type="entry name" value="RIBOSOMAL_L14"/>
    <property type="match status" value="1"/>
</dbReference>
<proteinExistence type="inferred from homology"/>
<feature type="chain" id="PRO_1000144287" description="Large ribosomal subunit protein uL14">
    <location>
        <begin position="1"/>
        <end position="122"/>
    </location>
</feature>
<name>RL14_LACCB</name>
<keyword id="KW-0687">Ribonucleoprotein</keyword>
<keyword id="KW-0689">Ribosomal protein</keyword>
<keyword id="KW-0694">RNA-binding</keyword>
<keyword id="KW-0699">rRNA-binding</keyword>
<gene>
    <name evidence="1" type="primary">rplN</name>
    <name type="ordered locus">LCABL_26600</name>
</gene>
<accession>B3WAK7</accession>
<comment type="function">
    <text evidence="1">Binds to 23S rRNA. Forms part of two intersubunit bridges in the 70S ribosome.</text>
</comment>
<comment type="subunit">
    <text evidence="1">Part of the 50S ribosomal subunit. Forms a cluster with proteins L3 and L19. In the 70S ribosome, L14 and L19 interact and together make contacts with the 16S rRNA in bridges B5 and B8.</text>
</comment>
<comment type="similarity">
    <text evidence="1">Belongs to the universal ribosomal protein uL14 family.</text>
</comment>
<reference key="1">
    <citation type="submission" date="2008-06" db="EMBL/GenBank/DDBJ databases">
        <title>Lactobacillus casei BL23 complete genome sequence.</title>
        <authorList>
            <person name="Maze A."/>
            <person name="Boel G."/>
            <person name="Bourand A."/>
            <person name="Loux V."/>
            <person name="Gibrat J.F."/>
            <person name="Zuniga M."/>
            <person name="Hartke A."/>
            <person name="Deutscher J."/>
        </authorList>
    </citation>
    <scope>NUCLEOTIDE SEQUENCE [LARGE SCALE GENOMIC DNA]</scope>
    <source>
        <strain>BL23</strain>
    </source>
</reference>